<evidence type="ECO:0000255" key="1">
    <source>
        <dbReference type="HAMAP-Rule" id="MF_00144"/>
    </source>
</evidence>
<keyword id="KW-0067">ATP-binding</keyword>
<keyword id="KW-0963">Cytoplasm</keyword>
<keyword id="KW-1015">Disulfide bond</keyword>
<keyword id="KW-0547">Nucleotide-binding</keyword>
<keyword id="KW-0694">RNA-binding</keyword>
<keyword id="KW-0808">Transferase</keyword>
<keyword id="KW-0819">tRNA processing</keyword>
<keyword id="KW-0820">tRNA-binding</keyword>
<comment type="function">
    <text evidence="1">Catalyzes the 2-thiolation of uridine at the wobble position (U34) of tRNA, leading to the formation of s(2)U34.</text>
</comment>
<comment type="catalytic activity">
    <reaction evidence="1">
        <text>S-sulfanyl-L-cysteinyl-[protein] + uridine(34) in tRNA + AH2 + ATP = 2-thiouridine(34) in tRNA + L-cysteinyl-[protein] + A + AMP + diphosphate + H(+)</text>
        <dbReference type="Rhea" id="RHEA:47032"/>
        <dbReference type="Rhea" id="RHEA-COMP:10131"/>
        <dbReference type="Rhea" id="RHEA-COMP:11726"/>
        <dbReference type="Rhea" id="RHEA-COMP:11727"/>
        <dbReference type="Rhea" id="RHEA-COMP:11728"/>
        <dbReference type="ChEBI" id="CHEBI:13193"/>
        <dbReference type="ChEBI" id="CHEBI:15378"/>
        <dbReference type="ChEBI" id="CHEBI:17499"/>
        <dbReference type="ChEBI" id="CHEBI:29950"/>
        <dbReference type="ChEBI" id="CHEBI:30616"/>
        <dbReference type="ChEBI" id="CHEBI:33019"/>
        <dbReference type="ChEBI" id="CHEBI:61963"/>
        <dbReference type="ChEBI" id="CHEBI:65315"/>
        <dbReference type="ChEBI" id="CHEBI:87170"/>
        <dbReference type="ChEBI" id="CHEBI:456215"/>
        <dbReference type="EC" id="2.8.1.13"/>
    </reaction>
</comment>
<comment type="subcellular location">
    <subcellularLocation>
        <location evidence="1">Cytoplasm</location>
    </subcellularLocation>
</comment>
<comment type="similarity">
    <text evidence="1">Belongs to the MnmA/TRMU family.</text>
</comment>
<sequence>MENKKVIVGISGGVDSSVSALLLKQQGYDVTGVFMKNWEEDDTDEFCSAEQDIADAQAVCDSIGIPFKKINFAAEYWDNVFEHFLIEYKAGRTPNPDILCNKEIKFKAFLSYVHLLGGDYIATGHYAQTRLAADGSVQLVKGLDDNKDQTYFLYTLGQEQLRQTIFPIGNIEKSKVREIAKENNLVTFDKKDSTGICFIGERKFKEFLSKYLPAQKGEIHDENGIKIGMHDGLMYYTIGQRQGLGIGGVKDRPEVPWFAAKKDLENNVLIAVQGHDHPLLFKQSLQAIELSWVAGMAPADKFRCAAKVRYRQKDQSCEVEVNQDGSVNVTFDQPQRAITPGQSVVFYIDDVCLGGGVII</sequence>
<protein>
    <recommendedName>
        <fullName evidence="1">tRNA-specific 2-thiouridylase MnmA</fullName>
        <ecNumber evidence="1">2.8.1.13</ecNumber>
    </recommendedName>
</protein>
<reference key="1">
    <citation type="journal article" date="2009" name="PLoS Pathog.">
        <title>Molecular evolutionary consequences of niche restriction in Francisella tularensis, a facultative intracellular pathogen.</title>
        <authorList>
            <person name="Larsson P."/>
            <person name="Elfsmark D."/>
            <person name="Svensson K."/>
            <person name="Wikstroem P."/>
            <person name="Forsman M."/>
            <person name="Brettin T."/>
            <person name="Keim P."/>
            <person name="Johansson A."/>
        </authorList>
    </citation>
    <scope>NUCLEOTIDE SEQUENCE [LARGE SCALE GENOMIC DNA]</scope>
    <source>
        <strain>FSC147</strain>
    </source>
</reference>
<proteinExistence type="inferred from homology"/>
<accession>B2SEJ7</accession>
<feature type="chain" id="PRO_0000349640" description="tRNA-specific 2-thiouridylase MnmA">
    <location>
        <begin position="1"/>
        <end position="359"/>
    </location>
</feature>
<feature type="region of interest" description="Interaction with target base in tRNA" evidence="1">
    <location>
        <begin position="95"/>
        <end position="97"/>
    </location>
</feature>
<feature type="region of interest" description="Interaction with tRNA" evidence="1">
    <location>
        <begin position="147"/>
        <end position="149"/>
    </location>
</feature>
<feature type="region of interest" description="Interaction with tRNA" evidence="1">
    <location>
        <begin position="309"/>
        <end position="310"/>
    </location>
</feature>
<feature type="active site" description="Nucleophile" evidence="1">
    <location>
        <position position="100"/>
    </location>
</feature>
<feature type="active site" description="Cysteine persulfide intermediate" evidence="1">
    <location>
        <position position="197"/>
    </location>
</feature>
<feature type="binding site" evidence="1">
    <location>
        <begin position="9"/>
        <end position="16"/>
    </location>
    <ligand>
        <name>ATP</name>
        <dbReference type="ChEBI" id="CHEBI:30616"/>
    </ligand>
</feature>
<feature type="binding site" evidence="1">
    <location>
        <position position="35"/>
    </location>
    <ligand>
        <name>ATP</name>
        <dbReference type="ChEBI" id="CHEBI:30616"/>
    </ligand>
</feature>
<feature type="binding site" evidence="1">
    <location>
        <position position="124"/>
    </location>
    <ligand>
        <name>ATP</name>
        <dbReference type="ChEBI" id="CHEBI:30616"/>
    </ligand>
</feature>
<feature type="site" description="Interaction with tRNA" evidence="1">
    <location>
        <position position="125"/>
    </location>
</feature>
<feature type="site" description="Interaction with tRNA" evidence="1">
    <location>
        <position position="342"/>
    </location>
</feature>
<feature type="disulfide bond" description="Alternate" evidence="1">
    <location>
        <begin position="100"/>
        <end position="197"/>
    </location>
</feature>
<gene>
    <name evidence="1" type="primary">mnmA</name>
    <name type="ordered locus">FTM_0043</name>
</gene>
<organism>
    <name type="scientific">Francisella tularensis subsp. mediasiatica (strain FSC147)</name>
    <dbReference type="NCBI Taxonomy" id="441952"/>
    <lineage>
        <taxon>Bacteria</taxon>
        <taxon>Pseudomonadati</taxon>
        <taxon>Pseudomonadota</taxon>
        <taxon>Gammaproteobacteria</taxon>
        <taxon>Thiotrichales</taxon>
        <taxon>Francisellaceae</taxon>
        <taxon>Francisella</taxon>
    </lineage>
</organism>
<name>MNMA_FRATM</name>
<dbReference type="EC" id="2.8.1.13" evidence="1"/>
<dbReference type="EMBL" id="CP000915">
    <property type="protein sequence ID" value="ACD30156.1"/>
    <property type="molecule type" value="Genomic_DNA"/>
</dbReference>
<dbReference type="SMR" id="B2SEJ7"/>
<dbReference type="KEGG" id="ftm:FTM_0043"/>
<dbReference type="HOGENOM" id="CLU_035188_1_0_6"/>
<dbReference type="GO" id="GO:0005737">
    <property type="term" value="C:cytoplasm"/>
    <property type="evidence" value="ECO:0007669"/>
    <property type="project" value="UniProtKB-SubCell"/>
</dbReference>
<dbReference type="GO" id="GO:0005524">
    <property type="term" value="F:ATP binding"/>
    <property type="evidence" value="ECO:0007669"/>
    <property type="project" value="UniProtKB-KW"/>
</dbReference>
<dbReference type="GO" id="GO:0000049">
    <property type="term" value="F:tRNA binding"/>
    <property type="evidence" value="ECO:0007669"/>
    <property type="project" value="UniProtKB-KW"/>
</dbReference>
<dbReference type="GO" id="GO:0103016">
    <property type="term" value="F:tRNA-uridine 2-sulfurtransferase activity"/>
    <property type="evidence" value="ECO:0007669"/>
    <property type="project" value="UniProtKB-EC"/>
</dbReference>
<dbReference type="GO" id="GO:0002143">
    <property type="term" value="P:tRNA wobble position uridine thiolation"/>
    <property type="evidence" value="ECO:0007669"/>
    <property type="project" value="TreeGrafter"/>
</dbReference>
<dbReference type="CDD" id="cd01998">
    <property type="entry name" value="MnmA_TRMU-like"/>
    <property type="match status" value="1"/>
</dbReference>
<dbReference type="FunFam" id="2.30.30.280:FF:000001">
    <property type="entry name" value="tRNA-specific 2-thiouridylase MnmA"/>
    <property type="match status" value="1"/>
</dbReference>
<dbReference type="FunFam" id="2.40.30.10:FF:000023">
    <property type="entry name" value="tRNA-specific 2-thiouridylase MnmA"/>
    <property type="match status" value="1"/>
</dbReference>
<dbReference type="FunFam" id="3.40.50.620:FF:000004">
    <property type="entry name" value="tRNA-specific 2-thiouridylase MnmA"/>
    <property type="match status" value="1"/>
</dbReference>
<dbReference type="Gene3D" id="2.30.30.280">
    <property type="entry name" value="Adenine nucleotide alpha hydrolases-like domains"/>
    <property type="match status" value="1"/>
</dbReference>
<dbReference type="Gene3D" id="3.40.50.620">
    <property type="entry name" value="HUPs"/>
    <property type="match status" value="1"/>
</dbReference>
<dbReference type="Gene3D" id="2.40.30.10">
    <property type="entry name" value="Translation factors"/>
    <property type="match status" value="1"/>
</dbReference>
<dbReference type="HAMAP" id="MF_00144">
    <property type="entry name" value="tRNA_thiouridyl_MnmA"/>
    <property type="match status" value="1"/>
</dbReference>
<dbReference type="InterPro" id="IPR004506">
    <property type="entry name" value="MnmA-like"/>
</dbReference>
<dbReference type="InterPro" id="IPR046885">
    <property type="entry name" value="MnmA-like_C"/>
</dbReference>
<dbReference type="InterPro" id="IPR046884">
    <property type="entry name" value="MnmA-like_central"/>
</dbReference>
<dbReference type="InterPro" id="IPR023382">
    <property type="entry name" value="MnmA-like_central_sf"/>
</dbReference>
<dbReference type="InterPro" id="IPR014729">
    <property type="entry name" value="Rossmann-like_a/b/a_fold"/>
</dbReference>
<dbReference type="NCBIfam" id="NF001138">
    <property type="entry name" value="PRK00143.1"/>
    <property type="match status" value="1"/>
</dbReference>
<dbReference type="NCBIfam" id="TIGR00420">
    <property type="entry name" value="trmU"/>
    <property type="match status" value="1"/>
</dbReference>
<dbReference type="PANTHER" id="PTHR11933:SF5">
    <property type="entry name" value="MITOCHONDRIAL TRNA-SPECIFIC 2-THIOURIDYLASE 1"/>
    <property type="match status" value="1"/>
</dbReference>
<dbReference type="PANTHER" id="PTHR11933">
    <property type="entry name" value="TRNA 5-METHYLAMINOMETHYL-2-THIOURIDYLATE -METHYLTRANSFERASE"/>
    <property type="match status" value="1"/>
</dbReference>
<dbReference type="Pfam" id="PF03054">
    <property type="entry name" value="tRNA_Me_trans"/>
    <property type="match status" value="1"/>
</dbReference>
<dbReference type="Pfam" id="PF20258">
    <property type="entry name" value="tRNA_Me_trans_C"/>
    <property type="match status" value="1"/>
</dbReference>
<dbReference type="Pfam" id="PF20259">
    <property type="entry name" value="tRNA_Me_trans_M"/>
    <property type="match status" value="1"/>
</dbReference>
<dbReference type="SUPFAM" id="SSF52402">
    <property type="entry name" value="Adenine nucleotide alpha hydrolases-like"/>
    <property type="match status" value="1"/>
</dbReference>